<dbReference type="EC" id="2.1.3.2" evidence="1"/>
<dbReference type="EMBL" id="CP000036">
    <property type="protein sequence ID" value="ABB68627.1"/>
    <property type="molecule type" value="Genomic_DNA"/>
</dbReference>
<dbReference type="RefSeq" id="WP_000013046.1">
    <property type="nucleotide sequence ID" value="NC_007613.1"/>
</dbReference>
<dbReference type="SMR" id="Q31TI1"/>
<dbReference type="GeneID" id="93777579"/>
<dbReference type="KEGG" id="sbo:SBO_4201"/>
<dbReference type="HOGENOM" id="CLU_043846_1_2_6"/>
<dbReference type="UniPathway" id="UPA00070">
    <property type="reaction ID" value="UER00116"/>
</dbReference>
<dbReference type="Proteomes" id="UP000007067">
    <property type="component" value="Chromosome"/>
</dbReference>
<dbReference type="GO" id="GO:0005829">
    <property type="term" value="C:cytosol"/>
    <property type="evidence" value="ECO:0007669"/>
    <property type="project" value="TreeGrafter"/>
</dbReference>
<dbReference type="GO" id="GO:0016597">
    <property type="term" value="F:amino acid binding"/>
    <property type="evidence" value="ECO:0007669"/>
    <property type="project" value="InterPro"/>
</dbReference>
<dbReference type="GO" id="GO:0004070">
    <property type="term" value="F:aspartate carbamoyltransferase activity"/>
    <property type="evidence" value="ECO:0007669"/>
    <property type="project" value="UniProtKB-UniRule"/>
</dbReference>
<dbReference type="GO" id="GO:0006207">
    <property type="term" value="P:'de novo' pyrimidine nucleobase biosynthetic process"/>
    <property type="evidence" value="ECO:0007669"/>
    <property type="project" value="InterPro"/>
</dbReference>
<dbReference type="GO" id="GO:0044205">
    <property type="term" value="P:'de novo' UMP biosynthetic process"/>
    <property type="evidence" value="ECO:0007669"/>
    <property type="project" value="UniProtKB-UniRule"/>
</dbReference>
<dbReference type="GO" id="GO:0006520">
    <property type="term" value="P:amino acid metabolic process"/>
    <property type="evidence" value="ECO:0007669"/>
    <property type="project" value="InterPro"/>
</dbReference>
<dbReference type="FunFam" id="3.40.50.1370:FF:000001">
    <property type="entry name" value="Aspartate carbamoyltransferase"/>
    <property type="match status" value="1"/>
</dbReference>
<dbReference type="FunFam" id="3.40.50.1370:FF:000002">
    <property type="entry name" value="Aspartate carbamoyltransferase 2"/>
    <property type="match status" value="1"/>
</dbReference>
<dbReference type="Gene3D" id="3.40.50.1370">
    <property type="entry name" value="Aspartate/ornithine carbamoyltransferase"/>
    <property type="match status" value="2"/>
</dbReference>
<dbReference type="HAMAP" id="MF_00001">
    <property type="entry name" value="Asp_carb_tr"/>
    <property type="match status" value="1"/>
</dbReference>
<dbReference type="InterPro" id="IPR006132">
    <property type="entry name" value="Asp/Orn_carbamoyltranf_P-bd"/>
</dbReference>
<dbReference type="InterPro" id="IPR006130">
    <property type="entry name" value="Asp/Orn_carbamoylTrfase"/>
</dbReference>
<dbReference type="InterPro" id="IPR036901">
    <property type="entry name" value="Asp/Orn_carbamoylTrfase_sf"/>
</dbReference>
<dbReference type="InterPro" id="IPR002082">
    <property type="entry name" value="Asp_carbamoyltransf"/>
</dbReference>
<dbReference type="InterPro" id="IPR006131">
    <property type="entry name" value="Asp_carbamoyltransf_Asp/Orn-bd"/>
</dbReference>
<dbReference type="NCBIfam" id="TIGR00670">
    <property type="entry name" value="asp_carb_tr"/>
    <property type="match status" value="1"/>
</dbReference>
<dbReference type="NCBIfam" id="NF002032">
    <property type="entry name" value="PRK00856.1"/>
    <property type="match status" value="1"/>
</dbReference>
<dbReference type="PANTHER" id="PTHR45753:SF6">
    <property type="entry name" value="ASPARTATE CARBAMOYLTRANSFERASE"/>
    <property type="match status" value="1"/>
</dbReference>
<dbReference type="PANTHER" id="PTHR45753">
    <property type="entry name" value="ORNITHINE CARBAMOYLTRANSFERASE, MITOCHONDRIAL"/>
    <property type="match status" value="1"/>
</dbReference>
<dbReference type="Pfam" id="PF00185">
    <property type="entry name" value="OTCace"/>
    <property type="match status" value="1"/>
</dbReference>
<dbReference type="Pfam" id="PF02729">
    <property type="entry name" value="OTCace_N"/>
    <property type="match status" value="1"/>
</dbReference>
<dbReference type="PRINTS" id="PR00100">
    <property type="entry name" value="AOTCASE"/>
</dbReference>
<dbReference type="PRINTS" id="PR00101">
    <property type="entry name" value="ATCASE"/>
</dbReference>
<dbReference type="SUPFAM" id="SSF53671">
    <property type="entry name" value="Aspartate/ornithine carbamoyltransferase"/>
    <property type="match status" value="1"/>
</dbReference>
<dbReference type="PROSITE" id="PS00097">
    <property type="entry name" value="CARBAMOYLTRANSFERASE"/>
    <property type="match status" value="1"/>
</dbReference>
<gene>
    <name evidence="1" type="primary">pyrB</name>
    <name type="ordered locus">SBO_4201</name>
</gene>
<name>PYRB_SHIBS</name>
<proteinExistence type="inferred from homology"/>
<protein>
    <recommendedName>
        <fullName evidence="1">Aspartate carbamoyltransferase catalytic subunit</fullName>
        <ecNumber evidence="1">2.1.3.2</ecNumber>
    </recommendedName>
    <alternativeName>
        <fullName evidence="1">Aspartate transcarbamylase</fullName>
        <shortName evidence="1">ATCase</shortName>
    </alternativeName>
</protein>
<sequence length="311" mass="34427">MANPLYQKHIISINDLSRDDLNLVLATAAKLKANPQPELLKHKVIASCFFEASTRTRLSFETSMHRLGASVVGFSDSANTSLGKKGETLADTISVISTYVDAIVMRHPQEGAARLATEFSGNVPVLNAGDGSNQHPTQTLLDLFTIQETQGRLDNLHVAMVGDLKYGRTVHSLTQALAKFDGNRFYFIAPDALAMPQYILDMLDEKGIAWSLHSSIEEVMAEVDILYMTRVQKERLDPSEYANVKAQFVLRASDLHNAKANMKVLHPLPRVDEIATDVDKTPHAWYFQQAGNGIFARQALLALVLNRDLVL</sequence>
<accession>Q31TI1</accession>
<feature type="chain" id="PRO_0000301618" description="Aspartate carbamoyltransferase catalytic subunit">
    <location>
        <begin position="1"/>
        <end position="311"/>
    </location>
</feature>
<feature type="binding site" evidence="1">
    <location>
        <position position="55"/>
    </location>
    <ligand>
        <name>carbamoyl phosphate</name>
        <dbReference type="ChEBI" id="CHEBI:58228"/>
    </ligand>
</feature>
<feature type="binding site" evidence="1">
    <location>
        <position position="56"/>
    </location>
    <ligand>
        <name>carbamoyl phosphate</name>
        <dbReference type="ChEBI" id="CHEBI:58228"/>
    </ligand>
</feature>
<feature type="binding site" evidence="1">
    <location>
        <position position="85"/>
    </location>
    <ligand>
        <name>L-aspartate</name>
        <dbReference type="ChEBI" id="CHEBI:29991"/>
    </ligand>
</feature>
<feature type="binding site" evidence="1">
    <location>
        <position position="106"/>
    </location>
    <ligand>
        <name>carbamoyl phosphate</name>
        <dbReference type="ChEBI" id="CHEBI:58228"/>
    </ligand>
</feature>
<feature type="binding site" evidence="1">
    <location>
        <position position="135"/>
    </location>
    <ligand>
        <name>carbamoyl phosphate</name>
        <dbReference type="ChEBI" id="CHEBI:58228"/>
    </ligand>
</feature>
<feature type="binding site" evidence="1">
    <location>
        <position position="138"/>
    </location>
    <ligand>
        <name>carbamoyl phosphate</name>
        <dbReference type="ChEBI" id="CHEBI:58228"/>
    </ligand>
</feature>
<feature type="binding site" evidence="1">
    <location>
        <position position="168"/>
    </location>
    <ligand>
        <name>L-aspartate</name>
        <dbReference type="ChEBI" id="CHEBI:29991"/>
    </ligand>
</feature>
<feature type="binding site" evidence="1">
    <location>
        <position position="230"/>
    </location>
    <ligand>
        <name>L-aspartate</name>
        <dbReference type="ChEBI" id="CHEBI:29991"/>
    </ligand>
</feature>
<feature type="binding site" evidence="1">
    <location>
        <position position="268"/>
    </location>
    <ligand>
        <name>carbamoyl phosphate</name>
        <dbReference type="ChEBI" id="CHEBI:58228"/>
    </ligand>
</feature>
<feature type="binding site" evidence="1">
    <location>
        <position position="269"/>
    </location>
    <ligand>
        <name>carbamoyl phosphate</name>
        <dbReference type="ChEBI" id="CHEBI:58228"/>
    </ligand>
</feature>
<evidence type="ECO:0000255" key="1">
    <source>
        <dbReference type="HAMAP-Rule" id="MF_00001"/>
    </source>
</evidence>
<organism>
    <name type="scientific">Shigella boydii serotype 4 (strain Sb227)</name>
    <dbReference type="NCBI Taxonomy" id="300268"/>
    <lineage>
        <taxon>Bacteria</taxon>
        <taxon>Pseudomonadati</taxon>
        <taxon>Pseudomonadota</taxon>
        <taxon>Gammaproteobacteria</taxon>
        <taxon>Enterobacterales</taxon>
        <taxon>Enterobacteriaceae</taxon>
        <taxon>Shigella</taxon>
    </lineage>
</organism>
<reference key="1">
    <citation type="journal article" date="2005" name="Nucleic Acids Res.">
        <title>Genome dynamics and diversity of Shigella species, the etiologic agents of bacillary dysentery.</title>
        <authorList>
            <person name="Yang F."/>
            <person name="Yang J."/>
            <person name="Zhang X."/>
            <person name="Chen L."/>
            <person name="Jiang Y."/>
            <person name="Yan Y."/>
            <person name="Tang X."/>
            <person name="Wang J."/>
            <person name="Xiong Z."/>
            <person name="Dong J."/>
            <person name="Xue Y."/>
            <person name="Zhu Y."/>
            <person name="Xu X."/>
            <person name="Sun L."/>
            <person name="Chen S."/>
            <person name="Nie H."/>
            <person name="Peng J."/>
            <person name="Xu J."/>
            <person name="Wang Y."/>
            <person name="Yuan Z."/>
            <person name="Wen Y."/>
            <person name="Yao Z."/>
            <person name="Shen Y."/>
            <person name="Qiang B."/>
            <person name="Hou Y."/>
            <person name="Yu J."/>
            <person name="Jin Q."/>
        </authorList>
    </citation>
    <scope>NUCLEOTIDE SEQUENCE [LARGE SCALE GENOMIC DNA]</scope>
    <source>
        <strain>Sb227</strain>
    </source>
</reference>
<comment type="function">
    <text evidence="1">Catalyzes the condensation of carbamoyl phosphate and aspartate to form carbamoyl aspartate and inorganic phosphate, the committed step in the de novo pyrimidine nucleotide biosynthesis pathway.</text>
</comment>
<comment type="catalytic activity">
    <reaction evidence="1">
        <text>carbamoyl phosphate + L-aspartate = N-carbamoyl-L-aspartate + phosphate + H(+)</text>
        <dbReference type="Rhea" id="RHEA:20013"/>
        <dbReference type="ChEBI" id="CHEBI:15378"/>
        <dbReference type="ChEBI" id="CHEBI:29991"/>
        <dbReference type="ChEBI" id="CHEBI:32814"/>
        <dbReference type="ChEBI" id="CHEBI:43474"/>
        <dbReference type="ChEBI" id="CHEBI:58228"/>
        <dbReference type="EC" id="2.1.3.2"/>
    </reaction>
</comment>
<comment type="pathway">
    <text evidence="1">Pyrimidine metabolism; UMP biosynthesis via de novo pathway; (S)-dihydroorotate from bicarbonate: step 2/3.</text>
</comment>
<comment type="subunit">
    <text evidence="1">Heterododecamer (2C3:3R2) of six catalytic PyrB chains organized as two trimers (C3), and six regulatory PyrI chains organized as three dimers (R2).</text>
</comment>
<comment type="similarity">
    <text evidence="1">Belongs to the aspartate/ornithine carbamoyltransferase superfamily. ATCase family.</text>
</comment>
<keyword id="KW-0665">Pyrimidine biosynthesis</keyword>
<keyword id="KW-0808">Transferase</keyword>